<dbReference type="EC" id="5.4.99.12" evidence="1"/>
<dbReference type="EMBL" id="CP000915">
    <property type="protein sequence ID" value="ACD30861.1"/>
    <property type="molecule type" value="Genomic_DNA"/>
</dbReference>
<dbReference type="SMR" id="B2SGK2"/>
<dbReference type="KEGG" id="ftm:FTM_0929"/>
<dbReference type="HOGENOM" id="CLU_014673_0_2_6"/>
<dbReference type="GO" id="GO:0003723">
    <property type="term" value="F:RNA binding"/>
    <property type="evidence" value="ECO:0007669"/>
    <property type="project" value="InterPro"/>
</dbReference>
<dbReference type="GO" id="GO:0160147">
    <property type="term" value="F:tRNA pseudouridine(38-40) synthase activity"/>
    <property type="evidence" value="ECO:0007669"/>
    <property type="project" value="UniProtKB-EC"/>
</dbReference>
<dbReference type="GO" id="GO:0031119">
    <property type="term" value="P:tRNA pseudouridine synthesis"/>
    <property type="evidence" value="ECO:0007669"/>
    <property type="project" value="UniProtKB-UniRule"/>
</dbReference>
<dbReference type="CDD" id="cd02570">
    <property type="entry name" value="PseudoU_synth_EcTruA"/>
    <property type="match status" value="1"/>
</dbReference>
<dbReference type="FunFam" id="3.30.70.580:FF:000001">
    <property type="entry name" value="tRNA pseudouridine synthase A"/>
    <property type="match status" value="1"/>
</dbReference>
<dbReference type="Gene3D" id="3.30.70.660">
    <property type="entry name" value="Pseudouridine synthase I, catalytic domain, C-terminal subdomain"/>
    <property type="match status" value="1"/>
</dbReference>
<dbReference type="Gene3D" id="3.30.70.580">
    <property type="entry name" value="Pseudouridine synthase I, catalytic domain, N-terminal subdomain"/>
    <property type="match status" value="1"/>
</dbReference>
<dbReference type="HAMAP" id="MF_00171">
    <property type="entry name" value="TruA"/>
    <property type="match status" value="1"/>
</dbReference>
<dbReference type="InterPro" id="IPR020103">
    <property type="entry name" value="PsdUridine_synth_cat_dom_sf"/>
</dbReference>
<dbReference type="InterPro" id="IPR001406">
    <property type="entry name" value="PsdUridine_synth_TruA"/>
</dbReference>
<dbReference type="InterPro" id="IPR020097">
    <property type="entry name" value="PsdUridine_synth_TruA_a/b_dom"/>
</dbReference>
<dbReference type="InterPro" id="IPR020095">
    <property type="entry name" value="PsdUridine_synth_TruA_C"/>
</dbReference>
<dbReference type="InterPro" id="IPR020094">
    <property type="entry name" value="TruA/RsuA/RluB/E/F_N"/>
</dbReference>
<dbReference type="NCBIfam" id="TIGR00071">
    <property type="entry name" value="hisT_truA"/>
    <property type="match status" value="1"/>
</dbReference>
<dbReference type="PANTHER" id="PTHR11142">
    <property type="entry name" value="PSEUDOURIDYLATE SYNTHASE"/>
    <property type="match status" value="1"/>
</dbReference>
<dbReference type="PANTHER" id="PTHR11142:SF0">
    <property type="entry name" value="TRNA PSEUDOURIDINE SYNTHASE-LIKE 1"/>
    <property type="match status" value="1"/>
</dbReference>
<dbReference type="Pfam" id="PF01416">
    <property type="entry name" value="PseudoU_synth_1"/>
    <property type="match status" value="2"/>
</dbReference>
<dbReference type="PIRSF" id="PIRSF001430">
    <property type="entry name" value="tRNA_psdUrid_synth"/>
    <property type="match status" value="1"/>
</dbReference>
<dbReference type="SUPFAM" id="SSF55120">
    <property type="entry name" value="Pseudouridine synthase"/>
    <property type="match status" value="1"/>
</dbReference>
<protein>
    <recommendedName>
        <fullName evidence="1">tRNA pseudouridine synthase A</fullName>
        <ecNumber evidence="1">5.4.99.12</ecNumber>
    </recommendedName>
    <alternativeName>
        <fullName evidence="1">tRNA pseudouridine(38-40) synthase</fullName>
    </alternativeName>
    <alternativeName>
        <fullName evidence="1">tRNA pseudouridylate synthase I</fullName>
    </alternativeName>
    <alternativeName>
        <fullName evidence="1">tRNA-uridine isomerase I</fullName>
    </alternativeName>
</protein>
<reference key="1">
    <citation type="journal article" date="2009" name="PLoS Pathog.">
        <title>Molecular evolutionary consequences of niche restriction in Francisella tularensis, a facultative intracellular pathogen.</title>
        <authorList>
            <person name="Larsson P."/>
            <person name="Elfsmark D."/>
            <person name="Svensson K."/>
            <person name="Wikstroem P."/>
            <person name="Forsman M."/>
            <person name="Brettin T."/>
            <person name="Keim P."/>
            <person name="Johansson A."/>
        </authorList>
    </citation>
    <scope>NUCLEOTIDE SEQUENCE [LARGE SCALE GENOMIC DNA]</scope>
    <source>
        <strain>FSC147</strain>
    </source>
</reference>
<sequence length="258" mass="29559">MKNYLLQIEYFGKNYCGWQRQSHSPSVQEELEKALSKIANQNIEVTCAGRTDTGVHATSQIVNFYSNADRPLSAWQRGVNALLPQDIKILAVQQVDNNFNSRFTAINRTYNYIIYNSATSSPIFAEHCLWENRELDIDKMNQACEYLLGEQDFSSFRSSQCQSNTPFRNIQKAEFIKQGSFIVFEVVGNAFLHHMIRNLVGSLLKVGLGFESPEWIKVVLEVKDRTQAAETAKAHGLYFVGVEYPEFSFKRQIIKLFC</sequence>
<evidence type="ECO:0000255" key="1">
    <source>
        <dbReference type="HAMAP-Rule" id="MF_00171"/>
    </source>
</evidence>
<gene>
    <name evidence="1" type="primary">truA</name>
    <name type="ordered locus">FTM_0929</name>
</gene>
<comment type="function">
    <text evidence="1">Formation of pseudouridine at positions 38, 39 and 40 in the anticodon stem and loop of transfer RNAs.</text>
</comment>
<comment type="catalytic activity">
    <reaction evidence="1">
        <text>uridine(38/39/40) in tRNA = pseudouridine(38/39/40) in tRNA</text>
        <dbReference type="Rhea" id="RHEA:22376"/>
        <dbReference type="Rhea" id="RHEA-COMP:10085"/>
        <dbReference type="Rhea" id="RHEA-COMP:10087"/>
        <dbReference type="ChEBI" id="CHEBI:65314"/>
        <dbReference type="ChEBI" id="CHEBI:65315"/>
        <dbReference type="EC" id="5.4.99.12"/>
    </reaction>
</comment>
<comment type="subunit">
    <text evidence="1">Homodimer.</text>
</comment>
<comment type="similarity">
    <text evidence="1">Belongs to the tRNA pseudouridine synthase TruA family.</text>
</comment>
<proteinExistence type="inferred from homology"/>
<name>TRUA_FRATM</name>
<accession>B2SGK2</accession>
<organism>
    <name type="scientific">Francisella tularensis subsp. mediasiatica (strain FSC147)</name>
    <dbReference type="NCBI Taxonomy" id="441952"/>
    <lineage>
        <taxon>Bacteria</taxon>
        <taxon>Pseudomonadati</taxon>
        <taxon>Pseudomonadota</taxon>
        <taxon>Gammaproteobacteria</taxon>
        <taxon>Thiotrichales</taxon>
        <taxon>Francisellaceae</taxon>
        <taxon>Francisella</taxon>
    </lineage>
</organism>
<feature type="chain" id="PRO_1000097744" description="tRNA pseudouridine synthase A">
    <location>
        <begin position="1"/>
        <end position="258"/>
    </location>
</feature>
<feature type="active site" description="Nucleophile" evidence="1">
    <location>
        <position position="52"/>
    </location>
</feature>
<feature type="binding site" evidence="1">
    <location>
        <position position="110"/>
    </location>
    <ligand>
        <name>substrate</name>
    </ligand>
</feature>
<keyword id="KW-0413">Isomerase</keyword>
<keyword id="KW-0819">tRNA processing</keyword>